<accession>Q87DU6</accession>
<proteinExistence type="inferred from homology"/>
<organism>
    <name type="scientific">Xylella fastidiosa (strain Temecula1 / ATCC 700964)</name>
    <dbReference type="NCBI Taxonomy" id="183190"/>
    <lineage>
        <taxon>Bacteria</taxon>
        <taxon>Pseudomonadati</taxon>
        <taxon>Pseudomonadota</taxon>
        <taxon>Gammaproteobacteria</taxon>
        <taxon>Lysobacterales</taxon>
        <taxon>Lysobacteraceae</taxon>
        <taxon>Xylella</taxon>
    </lineage>
</organism>
<reference key="1">
    <citation type="journal article" date="2003" name="J. Bacteriol.">
        <title>Comparative analyses of the complete genome sequences of Pierce's disease and citrus variegated chlorosis strains of Xylella fastidiosa.</title>
        <authorList>
            <person name="Van Sluys M.A."/>
            <person name="de Oliveira M.C."/>
            <person name="Monteiro-Vitorello C.B."/>
            <person name="Miyaki C.Y."/>
            <person name="Furlan L.R."/>
            <person name="Camargo L.E.A."/>
            <person name="da Silva A.C.R."/>
            <person name="Moon D.H."/>
            <person name="Takita M.A."/>
            <person name="Lemos E.G.M."/>
            <person name="Machado M.A."/>
            <person name="Ferro M.I.T."/>
            <person name="da Silva F.R."/>
            <person name="Goldman M.H.S."/>
            <person name="Goldman G.H."/>
            <person name="Lemos M.V.F."/>
            <person name="El-Dorry H."/>
            <person name="Tsai S.M."/>
            <person name="Carrer H."/>
            <person name="Carraro D.M."/>
            <person name="de Oliveira R.C."/>
            <person name="Nunes L.R."/>
            <person name="Siqueira W.J."/>
            <person name="Coutinho L.L."/>
            <person name="Kimura E.T."/>
            <person name="Ferro E.S."/>
            <person name="Harakava R."/>
            <person name="Kuramae E.E."/>
            <person name="Marino C.L."/>
            <person name="Giglioti E."/>
            <person name="Abreu I.L."/>
            <person name="Alves L.M.C."/>
            <person name="do Amaral A.M."/>
            <person name="Baia G.S."/>
            <person name="Blanco S.R."/>
            <person name="Brito M.S."/>
            <person name="Cannavan F.S."/>
            <person name="Celestino A.V."/>
            <person name="da Cunha A.F."/>
            <person name="Fenille R.C."/>
            <person name="Ferro J.A."/>
            <person name="Formighieri E.F."/>
            <person name="Kishi L.T."/>
            <person name="Leoni S.G."/>
            <person name="Oliveira A.R."/>
            <person name="Rosa V.E. Jr."/>
            <person name="Sassaki F.T."/>
            <person name="Sena J.A.D."/>
            <person name="de Souza A.A."/>
            <person name="Truffi D."/>
            <person name="Tsukumo F."/>
            <person name="Yanai G.M."/>
            <person name="Zaros L.G."/>
            <person name="Civerolo E.L."/>
            <person name="Simpson A.J.G."/>
            <person name="Almeida N.F. Jr."/>
            <person name="Setubal J.C."/>
            <person name="Kitajima J.P."/>
        </authorList>
    </citation>
    <scope>NUCLEOTIDE SEQUENCE [LARGE SCALE GENOMIC DNA]</scope>
    <source>
        <strain>Temecula1 / ATCC 700964</strain>
    </source>
</reference>
<gene>
    <name evidence="1" type="primary">glnS</name>
    <name type="ordered locus">PD_0584</name>
</gene>
<feature type="chain" id="PRO_0000195858" description="Glutamine--tRNA ligase">
    <location>
        <begin position="1"/>
        <end position="580"/>
    </location>
</feature>
<feature type="short sequence motif" description="'HIGH' region" evidence="1">
    <location>
        <begin position="41"/>
        <end position="51"/>
    </location>
</feature>
<feature type="short sequence motif" description="'KMSKS' region" evidence="1">
    <location>
        <begin position="292"/>
        <end position="296"/>
    </location>
</feature>
<feature type="binding site" evidence="1">
    <location>
        <begin position="42"/>
        <end position="44"/>
    </location>
    <ligand>
        <name>ATP</name>
        <dbReference type="ChEBI" id="CHEBI:30616"/>
    </ligand>
</feature>
<feature type="binding site" evidence="1">
    <location>
        <begin position="48"/>
        <end position="54"/>
    </location>
    <ligand>
        <name>ATP</name>
        <dbReference type="ChEBI" id="CHEBI:30616"/>
    </ligand>
</feature>
<feature type="binding site" evidence="1">
    <location>
        <position position="74"/>
    </location>
    <ligand>
        <name>L-glutamine</name>
        <dbReference type="ChEBI" id="CHEBI:58359"/>
    </ligand>
</feature>
<feature type="binding site" evidence="1">
    <location>
        <position position="218"/>
    </location>
    <ligand>
        <name>L-glutamine</name>
        <dbReference type="ChEBI" id="CHEBI:58359"/>
    </ligand>
</feature>
<feature type="binding site" evidence="1">
    <location>
        <position position="237"/>
    </location>
    <ligand>
        <name>ATP</name>
        <dbReference type="ChEBI" id="CHEBI:30616"/>
    </ligand>
</feature>
<feature type="binding site" evidence="1">
    <location>
        <begin position="285"/>
        <end position="286"/>
    </location>
    <ligand>
        <name>ATP</name>
        <dbReference type="ChEBI" id="CHEBI:30616"/>
    </ligand>
</feature>
<feature type="binding site" evidence="1">
    <location>
        <begin position="293"/>
        <end position="295"/>
    </location>
    <ligand>
        <name>ATP</name>
        <dbReference type="ChEBI" id="CHEBI:30616"/>
    </ligand>
</feature>
<name>SYQ_XYLFT</name>
<protein>
    <recommendedName>
        <fullName evidence="1">Glutamine--tRNA ligase</fullName>
        <ecNumber evidence="1">6.1.1.18</ecNumber>
    </recommendedName>
    <alternativeName>
        <fullName evidence="1">Glutaminyl-tRNA synthetase</fullName>
        <shortName evidence="1">GlnRS</shortName>
    </alternativeName>
</protein>
<dbReference type="EC" id="6.1.1.18" evidence="1"/>
<dbReference type="EMBL" id="AE009442">
    <property type="protein sequence ID" value="AAO28457.1"/>
    <property type="molecule type" value="Genomic_DNA"/>
</dbReference>
<dbReference type="RefSeq" id="WP_011097706.1">
    <property type="nucleotide sequence ID" value="NC_004556.1"/>
</dbReference>
<dbReference type="SMR" id="Q87DU6"/>
<dbReference type="KEGG" id="xft:PD_0584"/>
<dbReference type="HOGENOM" id="CLU_001882_2_3_6"/>
<dbReference type="Proteomes" id="UP000002516">
    <property type="component" value="Chromosome"/>
</dbReference>
<dbReference type="GO" id="GO:0005829">
    <property type="term" value="C:cytosol"/>
    <property type="evidence" value="ECO:0007669"/>
    <property type="project" value="TreeGrafter"/>
</dbReference>
<dbReference type="GO" id="GO:0005524">
    <property type="term" value="F:ATP binding"/>
    <property type="evidence" value="ECO:0007669"/>
    <property type="project" value="UniProtKB-UniRule"/>
</dbReference>
<dbReference type="GO" id="GO:0004819">
    <property type="term" value="F:glutamine-tRNA ligase activity"/>
    <property type="evidence" value="ECO:0007669"/>
    <property type="project" value="UniProtKB-UniRule"/>
</dbReference>
<dbReference type="GO" id="GO:0006425">
    <property type="term" value="P:glutaminyl-tRNA aminoacylation"/>
    <property type="evidence" value="ECO:0007669"/>
    <property type="project" value="InterPro"/>
</dbReference>
<dbReference type="GO" id="GO:0006424">
    <property type="term" value="P:glutamyl-tRNA aminoacylation"/>
    <property type="evidence" value="ECO:0007669"/>
    <property type="project" value="UniProtKB-UniRule"/>
</dbReference>
<dbReference type="FunFam" id="1.10.1160.10:FF:000001">
    <property type="entry name" value="Glutamine--tRNA ligase"/>
    <property type="match status" value="1"/>
</dbReference>
<dbReference type="FunFam" id="2.40.240.10:FF:000020">
    <property type="entry name" value="Glutamine--tRNA ligase"/>
    <property type="match status" value="1"/>
</dbReference>
<dbReference type="FunFam" id="3.90.800.10:FF:000001">
    <property type="entry name" value="Glutamine--tRNA ligase"/>
    <property type="match status" value="1"/>
</dbReference>
<dbReference type="FunFam" id="3.40.50.620:FF:000037">
    <property type="entry name" value="Glutamine--tRNA ligase cytoplasmic"/>
    <property type="match status" value="1"/>
</dbReference>
<dbReference type="Gene3D" id="1.10.1160.10">
    <property type="entry name" value="Glutamyl-trna Synthetase, Domain 2"/>
    <property type="match status" value="1"/>
</dbReference>
<dbReference type="Gene3D" id="3.90.800.10">
    <property type="entry name" value="Glutamyl-tRNA Synthetase, Domain 3"/>
    <property type="match status" value="1"/>
</dbReference>
<dbReference type="Gene3D" id="3.40.50.620">
    <property type="entry name" value="HUPs"/>
    <property type="match status" value="1"/>
</dbReference>
<dbReference type="Gene3D" id="2.40.240.10">
    <property type="entry name" value="Ribosomal Protein L25, Chain P"/>
    <property type="match status" value="2"/>
</dbReference>
<dbReference type="HAMAP" id="MF_00126">
    <property type="entry name" value="Gln_tRNA_synth"/>
    <property type="match status" value="1"/>
</dbReference>
<dbReference type="InterPro" id="IPR004514">
    <property type="entry name" value="Gln-tRNA-synth"/>
</dbReference>
<dbReference type="InterPro" id="IPR050132">
    <property type="entry name" value="Gln/Glu-tRNA_Ligase"/>
</dbReference>
<dbReference type="InterPro" id="IPR022861">
    <property type="entry name" value="Gln_tRNA_ligase_bac"/>
</dbReference>
<dbReference type="InterPro" id="IPR000924">
    <property type="entry name" value="Glu/Gln-tRNA-synth"/>
</dbReference>
<dbReference type="InterPro" id="IPR020058">
    <property type="entry name" value="Glu/Gln-tRNA-synth_Ib_cat-dom"/>
</dbReference>
<dbReference type="InterPro" id="IPR020059">
    <property type="entry name" value="Glu/Gln-tRNA-synth_Ib_codon-bd"/>
</dbReference>
<dbReference type="InterPro" id="IPR020061">
    <property type="entry name" value="Glu_tRNA_lig_a-bdl"/>
</dbReference>
<dbReference type="InterPro" id="IPR020056">
    <property type="entry name" value="Rbsml_bL25/Gln-tRNA_synth_N"/>
</dbReference>
<dbReference type="InterPro" id="IPR011035">
    <property type="entry name" value="Ribosomal_bL25/Gln-tRNA_synth"/>
</dbReference>
<dbReference type="InterPro" id="IPR014729">
    <property type="entry name" value="Rossmann-like_a/b/a_fold"/>
</dbReference>
<dbReference type="InterPro" id="IPR049437">
    <property type="entry name" value="tRNA-synt_1c_C2"/>
</dbReference>
<dbReference type="NCBIfam" id="TIGR00440">
    <property type="entry name" value="glnS"/>
    <property type="match status" value="1"/>
</dbReference>
<dbReference type="NCBIfam" id="NF011291">
    <property type="entry name" value="PRK14703.1"/>
    <property type="match status" value="1"/>
</dbReference>
<dbReference type="PANTHER" id="PTHR43097:SF5">
    <property type="entry name" value="GLUTAMATE--TRNA LIGASE"/>
    <property type="match status" value="1"/>
</dbReference>
<dbReference type="PANTHER" id="PTHR43097">
    <property type="entry name" value="GLUTAMINE-TRNA LIGASE"/>
    <property type="match status" value="1"/>
</dbReference>
<dbReference type="Pfam" id="PF00749">
    <property type="entry name" value="tRNA-synt_1c"/>
    <property type="match status" value="2"/>
</dbReference>
<dbReference type="Pfam" id="PF03950">
    <property type="entry name" value="tRNA-synt_1c_C"/>
    <property type="match status" value="1"/>
</dbReference>
<dbReference type="Pfam" id="PF20974">
    <property type="entry name" value="tRNA-synt_1c_C2"/>
    <property type="match status" value="1"/>
</dbReference>
<dbReference type="PRINTS" id="PR00987">
    <property type="entry name" value="TRNASYNTHGLU"/>
</dbReference>
<dbReference type="SUPFAM" id="SSF52374">
    <property type="entry name" value="Nucleotidylyl transferase"/>
    <property type="match status" value="1"/>
</dbReference>
<dbReference type="SUPFAM" id="SSF50715">
    <property type="entry name" value="Ribosomal protein L25-like"/>
    <property type="match status" value="1"/>
</dbReference>
<dbReference type="PROSITE" id="PS00178">
    <property type="entry name" value="AA_TRNA_LIGASE_I"/>
    <property type="match status" value="1"/>
</dbReference>
<sequence length="580" mass="66362">MSEITTTDAQAQPEKKDFIRQIIREDLAHGTHTHIHTRFPPEPNGYLHIGHAKAICLDFGVAAEFGGHCTLRMDDTNPSKEDPAFAAAIQEDVSWLGFHWNALRHTSDYFEVLYLAAEKLIADGKAYVCDLNSQQVREYRGTLTEAGRPSPWRERSPDENLELFRQMRAGTFPDGTRTLRAKIDMASGNINLRDPALYRIKHVEHQNTGNTWPIYPMYDFAHALSDAIEGITHSLCTLEFEDHRPLYDWCINHVDLPNNSHLLKPLLDKGFPQEPSQPRQIEFSRLNINYTVMSKRKLTALVDEKLVEGWDDPRMYTLQGLRRRGYTPAAMRLFVERIGISKQNSIIDFSVLENCLRENLDTIAPRRMATIAPMKLVLTNLAEDHEEQLIFPNHPKDDTQGTRTVPFSRELWIERDDFSEAPPKGWKRLIPGGEVRLRGAGIARIDEVVKNAEGHVIALHGWLDPTSRPGMEGAHRKVKGTIHWVSAPHAVAAEIRLYDRLFSIEKPDDNTDGKTYRDFLNPDSKRVVHGYIEPAAAQTAPEHAFQFERLGYFVTDRHDHDATHPVFNRSVTLRDTWQRD</sequence>
<keyword id="KW-0030">Aminoacyl-tRNA synthetase</keyword>
<keyword id="KW-0067">ATP-binding</keyword>
<keyword id="KW-0963">Cytoplasm</keyword>
<keyword id="KW-0436">Ligase</keyword>
<keyword id="KW-0547">Nucleotide-binding</keyword>
<keyword id="KW-0648">Protein biosynthesis</keyword>
<keyword id="KW-1185">Reference proteome</keyword>
<evidence type="ECO:0000255" key="1">
    <source>
        <dbReference type="HAMAP-Rule" id="MF_00126"/>
    </source>
</evidence>
<comment type="catalytic activity">
    <reaction evidence="1">
        <text>tRNA(Gln) + L-glutamine + ATP = L-glutaminyl-tRNA(Gln) + AMP + diphosphate</text>
        <dbReference type="Rhea" id="RHEA:20121"/>
        <dbReference type="Rhea" id="RHEA-COMP:9662"/>
        <dbReference type="Rhea" id="RHEA-COMP:9681"/>
        <dbReference type="ChEBI" id="CHEBI:30616"/>
        <dbReference type="ChEBI" id="CHEBI:33019"/>
        <dbReference type="ChEBI" id="CHEBI:58359"/>
        <dbReference type="ChEBI" id="CHEBI:78442"/>
        <dbReference type="ChEBI" id="CHEBI:78521"/>
        <dbReference type="ChEBI" id="CHEBI:456215"/>
        <dbReference type="EC" id="6.1.1.18"/>
    </reaction>
</comment>
<comment type="subunit">
    <text evidence="1">Monomer.</text>
</comment>
<comment type="subcellular location">
    <subcellularLocation>
        <location evidence="1">Cytoplasm</location>
    </subcellularLocation>
</comment>
<comment type="similarity">
    <text evidence="1">Belongs to the class-I aminoacyl-tRNA synthetase family.</text>
</comment>